<organism>
    <name type="scientific">Polaromonas naphthalenivorans (strain CJ2)</name>
    <dbReference type="NCBI Taxonomy" id="365044"/>
    <lineage>
        <taxon>Bacteria</taxon>
        <taxon>Pseudomonadati</taxon>
        <taxon>Pseudomonadota</taxon>
        <taxon>Betaproteobacteria</taxon>
        <taxon>Burkholderiales</taxon>
        <taxon>Comamonadaceae</taxon>
        <taxon>Polaromonas</taxon>
    </lineage>
</organism>
<gene>
    <name evidence="1" type="primary">rsmA</name>
    <name evidence="1" type="synonym">ksgA</name>
    <name type="ordered locus">Pnap_4074</name>
</gene>
<protein>
    <recommendedName>
        <fullName evidence="1">Ribosomal RNA small subunit methyltransferase A</fullName>
        <ecNumber evidence="1">2.1.1.182</ecNumber>
    </recommendedName>
    <alternativeName>
        <fullName evidence="1">16S rRNA (adenine(1518)-N(6)/adenine(1519)-N(6))-dimethyltransferase</fullName>
    </alternativeName>
    <alternativeName>
        <fullName evidence="1">16S rRNA dimethyladenosine transferase</fullName>
    </alternativeName>
    <alternativeName>
        <fullName evidence="1">16S rRNA dimethylase</fullName>
    </alternativeName>
    <alternativeName>
        <fullName evidence="1">S-adenosylmethionine-6-N', N'-adenosyl(rRNA) dimethyltransferase</fullName>
    </alternativeName>
</protein>
<keyword id="KW-0963">Cytoplasm</keyword>
<keyword id="KW-0489">Methyltransferase</keyword>
<keyword id="KW-1185">Reference proteome</keyword>
<keyword id="KW-0694">RNA-binding</keyword>
<keyword id="KW-0698">rRNA processing</keyword>
<keyword id="KW-0949">S-adenosyl-L-methionine</keyword>
<keyword id="KW-0808">Transferase</keyword>
<dbReference type="EC" id="2.1.1.182" evidence="1"/>
<dbReference type="EMBL" id="CP000529">
    <property type="protein sequence ID" value="ABM39365.1"/>
    <property type="molecule type" value="Genomic_DNA"/>
</dbReference>
<dbReference type="RefSeq" id="WP_011803427.1">
    <property type="nucleotide sequence ID" value="NC_008781.1"/>
</dbReference>
<dbReference type="SMR" id="A1VUN7"/>
<dbReference type="STRING" id="365044.Pnap_4074"/>
<dbReference type="KEGG" id="pna:Pnap_4074"/>
<dbReference type="eggNOG" id="COG0030">
    <property type="taxonomic scope" value="Bacteria"/>
</dbReference>
<dbReference type="HOGENOM" id="CLU_041220_0_1_4"/>
<dbReference type="OrthoDB" id="9814755at2"/>
<dbReference type="Proteomes" id="UP000000644">
    <property type="component" value="Chromosome"/>
</dbReference>
<dbReference type="GO" id="GO:0005829">
    <property type="term" value="C:cytosol"/>
    <property type="evidence" value="ECO:0007669"/>
    <property type="project" value="TreeGrafter"/>
</dbReference>
<dbReference type="GO" id="GO:0052908">
    <property type="term" value="F:16S rRNA (adenine(1518)-N(6)/adenine(1519)-N(6))-dimethyltransferase activity"/>
    <property type="evidence" value="ECO:0007669"/>
    <property type="project" value="UniProtKB-EC"/>
</dbReference>
<dbReference type="GO" id="GO:0003723">
    <property type="term" value="F:RNA binding"/>
    <property type="evidence" value="ECO:0007669"/>
    <property type="project" value="UniProtKB-KW"/>
</dbReference>
<dbReference type="Gene3D" id="1.10.8.100">
    <property type="entry name" value="Ribosomal RNA adenine dimethylase-like, domain 2"/>
    <property type="match status" value="1"/>
</dbReference>
<dbReference type="Gene3D" id="3.40.50.150">
    <property type="entry name" value="Vaccinia Virus protein VP39"/>
    <property type="match status" value="1"/>
</dbReference>
<dbReference type="HAMAP" id="MF_00607">
    <property type="entry name" value="16SrRNA_methyltr_A"/>
    <property type="match status" value="1"/>
</dbReference>
<dbReference type="InterPro" id="IPR001737">
    <property type="entry name" value="KsgA/Erm"/>
</dbReference>
<dbReference type="InterPro" id="IPR023165">
    <property type="entry name" value="rRNA_Ade_diMease-like_C"/>
</dbReference>
<dbReference type="InterPro" id="IPR020596">
    <property type="entry name" value="rRNA_Ade_Mease_Trfase_CS"/>
</dbReference>
<dbReference type="InterPro" id="IPR020598">
    <property type="entry name" value="rRNA_Ade_methylase_Trfase_N"/>
</dbReference>
<dbReference type="InterPro" id="IPR011530">
    <property type="entry name" value="rRNA_adenine_dimethylase"/>
</dbReference>
<dbReference type="InterPro" id="IPR029063">
    <property type="entry name" value="SAM-dependent_MTases_sf"/>
</dbReference>
<dbReference type="NCBIfam" id="TIGR00755">
    <property type="entry name" value="ksgA"/>
    <property type="match status" value="1"/>
</dbReference>
<dbReference type="PANTHER" id="PTHR11727">
    <property type="entry name" value="DIMETHYLADENOSINE TRANSFERASE"/>
    <property type="match status" value="1"/>
</dbReference>
<dbReference type="PANTHER" id="PTHR11727:SF7">
    <property type="entry name" value="DIMETHYLADENOSINE TRANSFERASE-RELATED"/>
    <property type="match status" value="1"/>
</dbReference>
<dbReference type="Pfam" id="PF00398">
    <property type="entry name" value="RrnaAD"/>
    <property type="match status" value="1"/>
</dbReference>
<dbReference type="SMART" id="SM00650">
    <property type="entry name" value="rADc"/>
    <property type="match status" value="1"/>
</dbReference>
<dbReference type="SUPFAM" id="SSF53335">
    <property type="entry name" value="S-adenosyl-L-methionine-dependent methyltransferases"/>
    <property type="match status" value="1"/>
</dbReference>
<dbReference type="PROSITE" id="PS01131">
    <property type="entry name" value="RRNA_A_DIMETH"/>
    <property type="match status" value="1"/>
</dbReference>
<dbReference type="PROSITE" id="PS51689">
    <property type="entry name" value="SAM_RNA_A_N6_MT"/>
    <property type="match status" value="1"/>
</dbReference>
<comment type="function">
    <text evidence="1">Specifically dimethylates two adjacent adenosines (A1518 and A1519) in the loop of a conserved hairpin near the 3'-end of 16S rRNA in the 30S particle. May play a critical role in biogenesis of 30S subunits.</text>
</comment>
<comment type="catalytic activity">
    <reaction evidence="1">
        <text>adenosine(1518)/adenosine(1519) in 16S rRNA + 4 S-adenosyl-L-methionine = N(6)-dimethyladenosine(1518)/N(6)-dimethyladenosine(1519) in 16S rRNA + 4 S-adenosyl-L-homocysteine + 4 H(+)</text>
        <dbReference type="Rhea" id="RHEA:19609"/>
        <dbReference type="Rhea" id="RHEA-COMP:10232"/>
        <dbReference type="Rhea" id="RHEA-COMP:10233"/>
        <dbReference type="ChEBI" id="CHEBI:15378"/>
        <dbReference type="ChEBI" id="CHEBI:57856"/>
        <dbReference type="ChEBI" id="CHEBI:59789"/>
        <dbReference type="ChEBI" id="CHEBI:74411"/>
        <dbReference type="ChEBI" id="CHEBI:74493"/>
        <dbReference type="EC" id="2.1.1.182"/>
    </reaction>
</comment>
<comment type="subcellular location">
    <subcellularLocation>
        <location evidence="1">Cytoplasm</location>
    </subcellularLocation>
</comment>
<comment type="similarity">
    <text evidence="1">Belongs to the class I-like SAM-binding methyltransferase superfamily. rRNA adenine N(6)-methyltransferase family. RsmA subfamily.</text>
</comment>
<reference key="1">
    <citation type="journal article" date="2009" name="Environ. Microbiol.">
        <title>The genome of Polaromonas naphthalenivorans strain CJ2, isolated from coal tar-contaminated sediment, reveals physiological and metabolic versatility and evolution through extensive horizontal gene transfer.</title>
        <authorList>
            <person name="Yagi J.M."/>
            <person name="Sims D."/>
            <person name="Brettin T."/>
            <person name="Bruce D."/>
            <person name="Madsen E.L."/>
        </authorList>
    </citation>
    <scope>NUCLEOTIDE SEQUENCE [LARGE SCALE GENOMIC DNA]</scope>
    <source>
        <strain>CJ2</strain>
    </source>
</reference>
<proteinExistence type="inferred from homology"/>
<accession>A1VUN7</accession>
<sequence>MKHIARKRFGQHFLTDRLIIEGIVEAIAPLPGQPMVEIGPGLAAMTRPLVERLGHLTVIELDRDLARQLRSNPQLTVIESDVLRVDFLQLAEQVQSAGALRGAASQTPSPCKLRVVGNLPYNISTPILFHLLDAVEVIEDQHFMLQKEVIDRMVAMPSTSDYGRLSVMLQWRYAMENVLYVPPQSFDPPPRVDSAIVRMVPHAEPARLDVKLLSELVRVAFSQRRKLLRHTLGQWLEQHAFSGEFDVKRRAEEVPVAEYLALAQQVQTGTAQPEKIELL</sequence>
<evidence type="ECO:0000255" key="1">
    <source>
        <dbReference type="HAMAP-Rule" id="MF_00607"/>
    </source>
</evidence>
<name>RSMA_POLNA</name>
<feature type="chain" id="PRO_1000056649" description="Ribosomal RNA small subunit methyltransferase A">
    <location>
        <begin position="1"/>
        <end position="279"/>
    </location>
</feature>
<feature type="binding site" evidence="1">
    <location>
        <position position="12"/>
    </location>
    <ligand>
        <name>S-adenosyl-L-methionine</name>
        <dbReference type="ChEBI" id="CHEBI:59789"/>
    </ligand>
</feature>
<feature type="binding site" evidence="1">
    <location>
        <position position="14"/>
    </location>
    <ligand>
        <name>S-adenosyl-L-methionine</name>
        <dbReference type="ChEBI" id="CHEBI:59789"/>
    </ligand>
</feature>
<feature type="binding site" evidence="1">
    <location>
        <position position="39"/>
    </location>
    <ligand>
        <name>S-adenosyl-L-methionine</name>
        <dbReference type="ChEBI" id="CHEBI:59789"/>
    </ligand>
</feature>
<feature type="binding site" evidence="1">
    <location>
        <position position="60"/>
    </location>
    <ligand>
        <name>S-adenosyl-L-methionine</name>
        <dbReference type="ChEBI" id="CHEBI:59789"/>
    </ligand>
</feature>
<feature type="binding site" evidence="1">
    <location>
        <position position="81"/>
    </location>
    <ligand>
        <name>S-adenosyl-L-methionine</name>
        <dbReference type="ChEBI" id="CHEBI:59789"/>
    </ligand>
</feature>
<feature type="binding site" evidence="1">
    <location>
        <position position="118"/>
    </location>
    <ligand>
        <name>S-adenosyl-L-methionine</name>
        <dbReference type="ChEBI" id="CHEBI:59789"/>
    </ligand>
</feature>